<feature type="chain" id="PRO_0000293500" description="Proton extrusion protein PxcA">
    <location>
        <begin position="1"/>
        <end position="382"/>
    </location>
</feature>
<feature type="transmembrane region" description="Helical" evidence="1">
    <location>
        <begin position="162"/>
        <end position="182"/>
    </location>
</feature>
<feature type="transmembrane region" description="Helical" evidence="1">
    <location>
        <begin position="257"/>
        <end position="277"/>
    </location>
</feature>
<feature type="transmembrane region" description="Helical" evidence="1">
    <location>
        <begin position="305"/>
        <end position="325"/>
    </location>
</feature>
<feature type="transmembrane region" description="Helical" evidence="1">
    <location>
        <begin position="340"/>
        <end position="360"/>
    </location>
</feature>
<evidence type="ECO:0000255" key="1">
    <source>
        <dbReference type="HAMAP-Rule" id="MF_01308"/>
    </source>
</evidence>
<proteinExistence type="inferred from homology"/>
<gene>
    <name evidence="1" type="primary">pxcA</name>
    <name type="ordered locus">Syncc9605_1329</name>
</gene>
<reference key="1">
    <citation type="submission" date="2005-07" db="EMBL/GenBank/DDBJ databases">
        <title>Complete sequence of Synechococcus sp. CC9605.</title>
        <authorList>
            <consortium name="US DOE Joint Genome Institute"/>
            <person name="Copeland A."/>
            <person name="Lucas S."/>
            <person name="Lapidus A."/>
            <person name="Barry K."/>
            <person name="Detter J.C."/>
            <person name="Glavina T."/>
            <person name="Hammon N."/>
            <person name="Israni S."/>
            <person name="Pitluck S."/>
            <person name="Schmutz J."/>
            <person name="Martinez M."/>
            <person name="Larimer F."/>
            <person name="Land M."/>
            <person name="Kyrpides N."/>
            <person name="Ivanova N."/>
            <person name="Richardson P."/>
        </authorList>
    </citation>
    <scope>NUCLEOTIDE SEQUENCE [LARGE SCALE GENOMIC DNA]</scope>
    <source>
        <strain>CC9605</strain>
    </source>
</reference>
<dbReference type="EMBL" id="CP000110">
    <property type="protein sequence ID" value="ABB35083.1"/>
    <property type="molecule type" value="Genomic_DNA"/>
</dbReference>
<dbReference type="RefSeq" id="WP_011364303.1">
    <property type="nucleotide sequence ID" value="NC_007516.1"/>
</dbReference>
<dbReference type="SMR" id="Q3AJZ9"/>
<dbReference type="STRING" id="110662.Syncc9605_1329"/>
<dbReference type="KEGG" id="syd:Syncc9605_1329"/>
<dbReference type="eggNOG" id="ENOG502Z8DN">
    <property type="taxonomic scope" value="Bacteria"/>
</dbReference>
<dbReference type="HOGENOM" id="CLU_690401_0_0_3"/>
<dbReference type="OrthoDB" id="418298at2"/>
<dbReference type="GO" id="GO:0005886">
    <property type="term" value="C:plasma membrane"/>
    <property type="evidence" value="ECO:0007669"/>
    <property type="project" value="UniProtKB-SubCell"/>
</dbReference>
<dbReference type="GO" id="GO:0015078">
    <property type="term" value="F:proton transmembrane transporter activity"/>
    <property type="evidence" value="ECO:0007669"/>
    <property type="project" value="UniProtKB-UniRule"/>
</dbReference>
<dbReference type="HAMAP" id="MF_01308">
    <property type="entry name" value="CemA_PxcA"/>
    <property type="match status" value="1"/>
</dbReference>
<dbReference type="InterPro" id="IPR004282">
    <property type="entry name" value="CemA"/>
</dbReference>
<dbReference type="NCBIfam" id="NF002705">
    <property type="entry name" value="PRK02507.1-4"/>
    <property type="match status" value="1"/>
</dbReference>
<dbReference type="PANTHER" id="PTHR33650:SF2">
    <property type="entry name" value="CHLOROPLAST ENVELOPE MEMBRANE PROTEIN"/>
    <property type="match status" value="1"/>
</dbReference>
<dbReference type="PANTHER" id="PTHR33650">
    <property type="entry name" value="CHLOROPLAST ENVELOPE MEMBRANE PROTEIN-RELATED"/>
    <property type="match status" value="1"/>
</dbReference>
<dbReference type="Pfam" id="PF03040">
    <property type="entry name" value="CemA"/>
    <property type="match status" value="1"/>
</dbReference>
<keyword id="KW-0997">Cell inner membrane</keyword>
<keyword id="KW-1003">Cell membrane</keyword>
<keyword id="KW-0375">Hydrogen ion transport</keyword>
<keyword id="KW-0406">Ion transport</keyword>
<keyword id="KW-0472">Membrane</keyword>
<keyword id="KW-0812">Transmembrane</keyword>
<keyword id="KW-1133">Transmembrane helix</keyword>
<keyword id="KW-0813">Transport</keyword>
<comment type="function">
    <text evidence="1">Required for H(+) efflux immediately after light irradiation to form a rapid H(+) concentration gradient across the thylakoid membranes. Together with PxcL, contributes to transient H(+) uptake following dark to light transition.</text>
</comment>
<comment type="subcellular location">
    <subcellularLocation>
        <location evidence="1">Cell inner membrane</location>
        <topology evidence="1">Multi-pass membrane protein</topology>
    </subcellularLocation>
</comment>
<comment type="similarity">
    <text evidence="1">Belongs to the CemA family.</text>
</comment>
<accession>Q3AJZ9</accession>
<organism>
    <name type="scientific">Synechococcus sp. (strain CC9605)</name>
    <dbReference type="NCBI Taxonomy" id="110662"/>
    <lineage>
        <taxon>Bacteria</taxon>
        <taxon>Bacillati</taxon>
        <taxon>Cyanobacteriota</taxon>
        <taxon>Cyanophyceae</taxon>
        <taxon>Synechococcales</taxon>
        <taxon>Synechococcaceae</taxon>
        <taxon>Synechococcus</taxon>
    </lineage>
</organism>
<protein>
    <recommendedName>
        <fullName evidence="1">Proton extrusion protein PxcA</fullName>
    </recommendedName>
</protein>
<name>PXCA_SYNSC</name>
<sequence length="382" mass="42646">MSRRNWINLFSTSQSVELSGDLERGYDAALLIQSLELEYYGDRQIRPELKLSVPRSVQATILRRFKTALSICRSSAAKLSDQRGQLDSQELRQLQLIESIVSRYGSRRSTSSPSISRSPDALPRSLLGVFDSIRLQLDPSTEDSVVAGFRRRRDTTLISLRVLLLLVLVPLLVSQISGTYLISPAVNQFSPELPFLSYPKPLLEEKAAKKLRLYKQELEFDAFLKGVEPLDDAELRNKLTEKATELKHDADEESLKAIKNVFADLAGLIAFAVVCLMSRDELRVLRGFVDEAVYGLSDSAKAFAIILFTDIFVGYHSPEGWSVLLDGVADHFGLPSSQSFVNLFIATFPVVLATIFKYWIFRYLNRVSPSSVATLKGMNGGG</sequence>